<accession>A0A8F4S8P5</accession>
<protein>
    <recommendedName>
        <fullName evidence="4">Epoxidase pydX</fullName>
        <ecNumber evidence="3">1.14.-.-</ecNumber>
    </recommendedName>
    <alternativeName>
        <fullName evidence="4">Pyrrocidines biosynthesis cluster protein X</fullName>
    </alternativeName>
</protein>
<keyword id="KW-0325">Glycoprotein</keyword>
<keyword id="KW-0472">Membrane</keyword>
<keyword id="KW-0560">Oxidoreductase</keyword>
<keyword id="KW-0732">Signal</keyword>
<keyword id="KW-0812">Transmembrane</keyword>
<keyword id="KW-1133">Transmembrane helix</keyword>
<keyword id="KW-0843">Virulence</keyword>
<feature type="signal peptide" evidence="1">
    <location>
        <begin position="1"/>
        <end position="26"/>
    </location>
</feature>
<feature type="chain" id="PRO_0000458434" description="Epoxidase pydX">
    <location>
        <begin position="27"/>
        <end position="162"/>
    </location>
</feature>
<feature type="transmembrane region" description="Helical" evidence="1">
    <location>
        <begin position="62"/>
        <end position="82"/>
    </location>
</feature>
<feature type="transmembrane region" description="Helical" evidence="1">
    <location>
        <begin position="89"/>
        <end position="109"/>
    </location>
</feature>
<feature type="glycosylation site" description="N-linked (GlcNAc...) asparagine" evidence="2">
    <location>
        <position position="127"/>
    </location>
</feature>
<feature type="glycosylation site" description="N-linked (GlcNAc...) asparagine" evidence="2">
    <location>
        <position position="139"/>
    </location>
</feature>
<name>PYDX_ACRSP</name>
<evidence type="ECO:0000255" key="1"/>
<evidence type="ECO:0000255" key="2">
    <source>
        <dbReference type="PROSITE-ProRule" id="PRU00498"/>
    </source>
</evidence>
<evidence type="ECO:0000269" key="3">
    <source>
    </source>
</evidence>
<evidence type="ECO:0000303" key="4">
    <source>
    </source>
</evidence>
<evidence type="ECO:0000305" key="5"/>
<evidence type="ECO:0000305" key="6">
    <source>
    </source>
</evidence>
<comment type="function">
    <text evidence="3 6">Epoxidase; part of the gene cluster that mediates the biosynthesis of pyrrocidines, fungal natural products containing a macrocyclic para-cyclophane connected to a decahydrofluorene ring system that show potent antibiotic activities toward Gram-negative bacteria (PubMed:33834778). Within the pathway, pydX functions synergistically with pydB, pydE and pydZ to form the cyclophane (PubMed:33834778). The pathway begins with the PKS-NRPS pydA which, with the help of the trans-enoyl reductase pydC, synthesizes the polyketide-tyrosyl acyl thioester product which can be reductively off-loaded by the terminal reductase (R) domain in pydA. The alpha/beta hydrolase pydG is then required to catalyze the subsequent Knoevenagel condensation that affords the 3-pyrrolin-2-one ring, whereas the four proteins pydB, pydE, pydX and pydZ then function synergistically to form the cyclophane. PydB and the membrane-bound pydX and pydZ are lipid-binding proteins that can sequester and mold the pdyG product into the inverse S-shape. Binding of the medium chain reductase pydE to the complex would trigger the cascade oxidative cyclization. PydY is involved in the Diels-Alder cycloaddition that forms the decahydrofluorene core. Additional non-enzymatic hydroxylation yields pyrrocidine A2 which can be further reduced into pyrrocidine B by an endogenous reductase (Probable).</text>
</comment>
<comment type="pathway">
    <text evidence="3">Mycotoxin biosynthesis.</text>
</comment>
<comment type="subcellular location">
    <subcellularLocation>
        <location evidence="1">Membrane</location>
        <topology evidence="1">Multi-pass membrane protein</topology>
    </subcellularLocation>
</comment>
<comment type="similarity">
    <text evidence="5">Belongs to the epoxidase xenD family.</text>
</comment>
<sequence>MSLIALPLRLLRLLPAITSTWVLAFALDEHLIFGTWVQPSLRESANANLPAWWTTGGLRWRWILIVVYPINYALGVVNLFVGRDELRATGAMSWYTIGLLFSLAHMGYMRTALDRIGMIERGVPRGNVTSSMESWLRMNRTRALVTDLPAWICFVTAALKAL</sequence>
<organism>
    <name type="scientific">Acremonium sp</name>
    <dbReference type="NCBI Taxonomy" id="2046025"/>
    <lineage>
        <taxon>Eukaryota</taxon>
        <taxon>Fungi</taxon>
        <taxon>Dikarya</taxon>
        <taxon>Ascomycota</taxon>
        <taxon>Pezizomycotina</taxon>
        <taxon>Sordariomycetes</taxon>
        <taxon>Hypocreomycetidae</taxon>
        <taxon>Hypocreales</taxon>
        <taxon>Hypocreales incertae sedis</taxon>
        <taxon>Acremonium</taxon>
    </lineage>
</organism>
<reference key="1">
    <citation type="journal article" date="2021" name="J. Am. Chem. Soc.">
        <title>Biosynthesis of para-cyclophane-containing hirsutellone family of fungal natural products.</title>
        <authorList>
            <person name="Ohashi M."/>
            <person name="Kakule T.B."/>
            <person name="Tang M.C."/>
            <person name="Jamieson C.S."/>
            <person name="Liu M."/>
            <person name="Zhao Y.L."/>
            <person name="Houk K.N."/>
            <person name="Tang Y."/>
        </authorList>
    </citation>
    <scope>NUCLEOTIDE SEQUENCE [GENOMIC DNA]</scope>
    <scope>FUNCTION</scope>
    <scope>CATALYTIC ACTIVITY</scope>
    <scope>PATHWAY</scope>
</reference>
<proteinExistence type="evidence at protein level"/>
<gene>
    <name evidence="4" type="primary">pydX</name>
</gene>
<dbReference type="EC" id="1.14.-.-" evidence="3"/>
<dbReference type="EMBL" id="MW690134">
    <property type="protein sequence ID" value="QXF14598.1"/>
    <property type="molecule type" value="Genomic_DNA"/>
</dbReference>
<dbReference type="GO" id="GO:0016020">
    <property type="term" value="C:membrane"/>
    <property type="evidence" value="ECO:0007669"/>
    <property type="project" value="UniProtKB-SubCell"/>
</dbReference>
<dbReference type="GO" id="GO:0016491">
    <property type="term" value="F:oxidoreductase activity"/>
    <property type="evidence" value="ECO:0007669"/>
    <property type="project" value="UniProtKB-KW"/>
</dbReference>